<sequence>MGFIDGKWAPMIVLIVSNMIAGMVNALVKKVLDGGINHMVIATYRLGISTLFLLPVAYFWERKTRPKLTLSISCQLFVSALFGASLMQYFYLLGLSYTSATLGSAFWAIMPSLTFVMALIFGFEKLSLKTKIGYGVVLGTLISLVGGLLLTMYQGIPLTNSPEQAANSNNHTGHENWIKGCFFLLTGVVLFSSWMLIQAKINVKYPCPYSSTVILSVFGTLQCALLSLIKTRHLEDWILRDELTIITVVIAGVVAQGMCTVGMSWCIKQQGPVVSSSFSPVVLMSATVFDFLILHREIYLGSVIGSVVVVIGLYIFLWSRSKQIVECKIMKLPTNTVEEEKEEEGRTNVNNGQLLVIPMTP</sequence>
<reference key="1">
    <citation type="journal article" date="1999" name="Nature">
        <title>Sequence and analysis of chromosome 4 of the plant Arabidopsis thaliana.</title>
        <authorList>
            <person name="Mayer K.F.X."/>
            <person name="Schueller C."/>
            <person name="Wambutt R."/>
            <person name="Murphy G."/>
            <person name="Volckaert G."/>
            <person name="Pohl T."/>
            <person name="Duesterhoeft A."/>
            <person name="Stiekema W."/>
            <person name="Entian K.-D."/>
            <person name="Terryn N."/>
            <person name="Harris B."/>
            <person name="Ansorge W."/>
            <person name="Brandt P."/>
            <person name="Grivell L.A."/>
            <person name="Rieger M."/>
            <person name="Weichselgartner M."/>
            <person name="de Simone V."/>
            <person name="Obermaier B."/>
            <person name="Mache R."/>
            <person name="Mueller M."/>
            <person name="Kreis M."/>
            <person name="Delseny M."/>
            <person name="Puigdomenech P."/>
            <person name="Watson M."/>
            <person name="Schmidtheini T."/>
            <person name="Reichert B."/>
            <person name="Portetelle D."/>
            <person name="Perez-Alonso M."/>
            <person name="Boutry M."/>
            <person name="Bancroft I."/>
            <person name="Vos P."/>
            <person name="Hoheisel J."/>
            <person name="Zimmermann W."/>
            <person name="Wedler H."/>
            <person name="Ridley P."/>
            <person name="Langham S.-A."/>
            <person name="McCullagh B."/>
            <person name="Bilham L."/>
            <person name="Robben J."/>
            <person name="van der Schueren J."/>
            <person name="Grymonprez B."/>
            <person name="Chuang Y.-J."/>
            <person name="Vandenbussche F."/>
            <person name="Braeken M."/>
            <person name="Weltjens I."/>
            <person name="Voet M."/>
            <person name="Bastiaens I."/>
            <person name="Aert R."/>
            <person name="Defoor E."/>
            <person name="Weitzenegger T."/>
            <person name="Bothe G."/>
            <person name="Ramsperger U."/>
            <person name="Hilbert H."/>
            <person name="Braun M."/>
            <person name="Holzer E."/>
            <person name="Brandt A."/>
            <person name="Peters S."/>
            <person name="van Staveren M."/>
            <person name="Dirkse W."/>
            <person name="Mooijman P."/>
            <person name="Klein Lankhorst R."/>
            <person name="Rose M."/>
            <person name="Hauf J."/>
            <person name="Koetter P."/>
            <person name="Berneiser S."/>
            <person name="Hempel S."/>
            <person name="Feldpausch M."/>
            <person name="Lamberth S."/>
            <person name="Van den Daele H."/>
            <person name="De Keyser A."/>
            <person name="Buysshaert C."/>
            <person name="Gielen J."/>
            <person name="Villarroel R."/>
            <person name="De Clercq R."/>
            <person name="van Montagu M."/>
            <person name="Rogers J."/>
            <person name="Cronin A."/>
            <person name="Quail M.A."/>
            <person name="Bray-Allen S."/>
            <person name="Clark L."/>
            <person name="Doggett J."/>
            <person name="Hall S."/>
            <person name="Kay M."/>
            <person name="Lennard N."/>
            <person name="McLay K."/>
            <person name="Mayes R."/>
            <person name="Pettett A."/>
            <person name="Rajandream M.A."/>
            <person name="Lyne M."/>
            <person name="Benes V."/>
            <person name="Rechmann S."/>
            <person name="Borkova D."/>
            <person name="Bloecker H."/>
            <person name="Scharfe M."/>
            <person name="Grimm M."/>
            <person name="Loehnert T.-H."/>
            <person name="Dose S."/>
            <person name="de Haan M."/>
            <person name="Maarse A.C."/>
            <person name="Schaefer M."/>
            <person name="Mueller-Auer S."/>
            <person name="Gabel C."/>
            <person name="Fuchs M."/>
            <person name="Fartmann B."/>
            <person name="Granderath K."/>
            <person name="Dauner D."/>
            <person name="Herzl A."/>
            <person name="Neumann S."/>
            <person name="Argiriou A."/>
            <person name="Vitale D."/>
            <person name="Liguori R."/>
            <person name="Piravandi E."/>
            <person name="Massenet O."/>
            <person name="Quigley F."/>
            <person name="Clabauld G."/>
            <person name="Muendlein A."/>
            <person name="Felber R."/>
            <person name="Schnabl S."/>
            <person name="Hiller R."/>
            <person name="Schmidt W."/>
            <person name="Lecharny A."/>
            <person name="Aubourg S."/>
            <person name="Chefdor F."/>
            <person name="Cooke R."/>
            <person name="Berger C."/>
            <person name="Monfort A."/>
            <person name="Casacuberta E."/>
            <person name="Gibbons T."/>
            <person name="Weber N."/>
            <person name="Vandenbol M."/>
            <person name="Bargues M."/>
            <person name="Terol J."/>
            <person name="Torres A."/>
            <person name="Perez-Perez A."/>
            <person name="Purnelle B."/>
            <person name="Bent E."/>
            <person name="Johnson S."/>
            <person name="Tacon D."/>
            <person name="Jesse T."/>
            <person name="Heijnen L."/>
            <person name="Schwarz S."/>
            <person name="Scholler P."/>
            <person name="Heber S."/>
            <person name="Francs P."/>
            <person name="Bielke C."/>
            <person name="Frishman D."/>
            <person name="Haase D."/>
            <person name="Lemcke K."/>
            <person name="Mewes H.-W."/>
            <person name="Stocker S."/>
            <person name="Zaccaria P."/>
            <person name="Bevan M."/>
            <person name="Wilson R.K."/>
            <person name="de la Bastide M."/>
            <person name="Habermann K."/>
            <person name="Parnell L."/>
            <person name="Dedhia N."/>
            <person name="Gnoj L."/>
            <person name="Schutz K."/>
            <person name="Huang E."/>
            <person name="Spiegel L."/>
            <person name="Sekhon M."/>
            <person name="Murray J."/>
            <person name="Sheet P."/>
            <person name="Cordes M."/>
            <person name="Abu-Threideh J."/>
            <person name="Stoneking T."/>
            <person name="Kalicki J."/>
            <person name="Graves T."/>
            <person name="Harmon G."/>
            <person name="Edwards J."/>
            <person name="Latreille P."/>
            <person name="Courtney L."/>
            <person name="Cloud J."/>
            <person name="Abbott A."/>
            <person name="Scott K."/>
            <person name="Johnson D."/>
            <person name="Minx P."/>
            <person name="Bentley D."/>
            <person name="Fulton B."/>
            <person name="Miller N."/>
            <person name="Greco T."/>
            <person name="Kemp K."/>
            <person name="Kramer J."/>
            <person name="Fulton L."/>
            <person name="Mardis E."/>
            <person name="Dante M."/>
            <person name="Pepin K."/>
            <person name="Hillier L.W."/>
            <person name="Nelson J."/>
            <person name="Spieth J."/>
            <person name="Ryan E."/>
            <person name="Andrews S."/>
            <person name="Geisel C."/>
            <person name="Layman D."/>
            <person name="Du H."/>
            <person name="Ali J."/>
            <person name="Berghoff A."/>
            <person name="Jones K."/>
            <person name="Drone K."/>
            <person name="Cotton M."/>
            <person name="Joshu C."/>
            <person name="Antonoiu B."/>
            <person name="Zidanic M."/>
            <person name="Strong C."/>
            <person name="Sun H."/>
            <person name="Lamar B."/>
            <person name="Yordan C."/>
            <person name="Ma P."/>
            <person name="Zhong J."/>
            <person name="Preston R."/>
            <person name="Vil D."/>
            <person name="Shekher M."/>
            <person name="Matero A."/>
            <person name="Shah R."/>
            <person name="Swaby I.K."/>
            <person name="O'Shaughnessy A."/>
            <person name="Rodriguez M."/>
            <person name="Hoffman J."/>
            <person name="Till S."/>
            <person name="Granat S."/>
            <person name="Shohdy N."/>
            <person name="Hasegawa A."/>
            <person name="Hameed A."/>
            <person name="Lodhi M."/>
            <person name="Johnson A."/>
            <person name="Chen E."/>
            <person name="Marra M.A."/>
            <person name="Martienssen R."/>
            <person name="McCombie W.R."/>
        </authorList>
    </citation>
    <scope>NUCLEOTIDE SEQUENCE [LARGE SCALE GENOMIC DNA]</scope>
    <source>
        <strain>cv. Columbia</strain>
    </source>
</reference>
<reference key="2">
    <citation type="journal article" date="2017" name="Plant J.">
        <title>Araport11: a complete reannotation of the Arabidopsis thaliana reference genome.</title>
        <authorList>
            <person name="Cheng C.Y."/>
            <person name="Krishnakumar V."/>
            <person name="Chan A.P."/>
            <person name="Thibaud-Nissen F."/>
            <person name="Schobel S."/>
            <person name="Town C.D."/>
        </authorList>
    </citation>
    <scope>GENOME REANNOTATION</scope>
    <source>
        <strain>cv. Columbia</strain>
    </source>
</reference>
<reference key="3">
    <citation type="journal article" date="2002" name="Science">
        <title>Functional annotation of a full-length Arabidopsis cDNA collection.</title>
        <authorList>
            <person name="Seki M."/>
            <person name="Narusaka M."/>
            <person name="Kamiya A."/>
            <person name="Ishida J."/>
            <person name="Satou M."/>
            <person name="Sakurai T."/>
            <person name="Nakajima M."/>
            <person name="Enju A."/>
            <person name="Akiyama K."/>
            <person name="Oono Y."/>
            <person name="Muramatsu M."/>
            <person name="Hayashizaki Y."/>
            <person name="Kawai J."/>
            <person name="Carninci P."/>
            <person name="Itoh M."/>
            <person name="Ishii Y."/>
            <person name="Arakawa T."/>
            <person name="Shibata K."/>
            <person name="Shinagawa A."/>
            <person name="Shinozaki K."/>
        </authorList>
    </citation>
    <scope>NUCLEOTIDE SEQUENCE [LARGE SCALE MRNA] (ISOFORM 2)</scope>
    <source>
        <strain>cv. Columbia</strain>
    </source>
</reference>
<reference key="4">
    <citation type="journal article" date="2003" name="Science">
        <title>Empirical analysis of transcriptional activity in the Arabidopsis genome.</title>
        <authorList>
            <person name="Yamada K."/>
            <person name="Lim J."/>
            <person name="Dale J.M."/>
            <person name="Chen H."/>
            <person name="Shinn P."/>
            <person name="Palm C.J."/>
            <person name="Southwick A.M."/>
            <person name="Wu H.C."/>
            <person name="Kim C.J."/>
            <person name="Nguyen M."/>
            <person name="Pham P.K."/>
            <person name="Cheuk R.F."/>
            <person name="Karlin-Newmann G."/>
            <person name="Liu S.X."/>
            <person name="Lam B."/>
            <person name="Sakano H."/>
            <person name="Wu T."/>
            <person name="Yu G."/>
            <person name="Miranda M."/>
            <person name="Quach H.L."/>
            <person name="Tripp M."/>
            <person name="Chang C.H."/>
            <person name="Lee J.M."/>
            <person name="Toriumi M.J."/>
            <person name="Chan M.M."/>
            <person name="Tang C.C."/>
            <person name="Onodera C.S."/>
            <person name="Deng J.M."/>
            <person name="Akiyama K."/>
            <person name="Ansari Y."/>
            <person name="Arakawa T."/>
            <person name="Banh J."/>
            <person name="Banno F."/>
            <person name="Bowser L."/>
            <person name="Brooks S.Y."/>
            <person name="Carninci P."/>
            <person name="Chao Q."/>
            <person name="Choy N."/>
            <person name="Enju A."/>
            <person name="Goldsmith A.D."/>
            <person name="Gurjal M."/>
            <person name="Hansen N.F."/>
            <person name="Hayashizaki Y."/>
            <person name="Johnson-Hopson C."/>
            <person name="Hsuan V.W."/>
            <person name="Iida K."/>
            <person name="Karnes M."/>
            <person name="Khan S."/>
            <person name="Koesema E."/>
            <person name="Ishida J."/>
            <person name="Jiang P.X."/>
            <person name="Jones T."/>
            <person name="Kawai J."/>
            <person name="Kamiya A."/>
            <person name="Meyers C."/>
            <person name="Nakajima M."/>
            <person name="Narusaka M."/>
            <person name="Seki M."/>
            <person name="Sakurai T."/>
            <person name="Satou M."/>
            <person name="Tamse R."/>
            <person name="Vaysberg M."/>
            <person name="Wallender E.K."/>
            <person name="Wong C."/>
            <person name="Yamamura Y."/>
            <person name="Yuan S."/>
            <person name="Shinozaki K."/>
            <person name="Davis R.W."/>
            <person name="Theologis A."/>
            <person name="Ecker J.R."/>
        </authorList>
    </citation>
    <scope>NUCLEOTIDE SEQUENCE [LARGE SCALE MRNA] (ISOFORM 2)</scope>
    <source>
        <strain>cv. Columbia</strain>
    </source>
</reference>
<reference key="5">
    <citation type="journal article" date="2004" name="Genome Res.">
        <title>Whole genome sequence comparisons and 'full-length' cDNA sequences: a combined approach to evaluate and improve Arabidopsis genome annotation.</title>
        <authorList>
            <person name="Castelli V."/>
            <person name="Aury J.-M."/>
            <person name="Jaillon O."/>
            <person name="Wincker P."/>
            <person name="Clepet C."/>
            <person name="Menard M."/>
            <person name="Cruaud C."/>
            <person name="Quetier F."/>
            <person name="Scarpelli C."/>
            <person name="Schaechter V."/>
            <person name="Temple G."/>
            <person name="Caboche M."/>
            <person name="Weissenbach J."/>
            <person name="Salanoubat M."/>
        </authorList>
    </citation>
    <scope>NUCLEOTIDE SEQUENCE [LARGE SCALE MRNA] (ISOFORMS 1 AND 3)</scope>
    <source>
        <strain>cv. Columbia</strain>
    </source>
</reference>
<name>WTR30_ARATH</name>
<comment type="subcellular location">
    <subcellularLocation>
        <location evidence="1">Membrane</location>
        <topology evidence="6">Multi-pass membrane protein</topology>
    </subcellularLocation>
</comment>
<comment type="alternative products">
    <event type="alternative splicing"/>
    <isoform>
        <id>Q9M129-1</id>
        <name>1</name>
        <sequence type="displayed"/>
    </isoform>
    <isoform>
        <id>Q9M129-2</id>
        <name>2</name>
        <sequence type="described" ref="VSP_045515"/>
    </isoform>
    <isoform>
        <id>Q9M129-3</id>
        <name>3</name>
        <sequence type="described" ref="VSP_045513 VSP_045514"/>
    </isoform>
</comment>
<comment type="similarity">
    <text evidence="6">Belongs to the drug/metabolite transporter (DMT) superfamily. Plant drug/metabolite exporter (P-DME) (TC 2.A.7.4) family.</text>
</comment>
<comment type="sequence caution" evidence="6">
    <conflict type="erroneous gene model prediction">
        <sequence resource="EMBL-CDS" id="AAC62788"/>
    </conflict>
</comment>
<comment type="sequence caution" evidence="6">
    <conflict type="frameshift">
        <sequence resource="EMBL" id="BX827878"/>
    </conflict>
</comment>
<dbReference type="EMBL" id="AF096370">
    <property type="protein sequence ID" value="AAC62788.1"/>
    <property type="status" value="ALT_SEQ"/>
    <property type="molecule type" value="Genomic_DNA"/>
</dbReference>
<dbReference type="EMBL" id="AL161492">
    <property type="protein sequence ID" value="CAB77715.1"/>
    <property type="molecule type" value="Genomic_DNA"/>
</dbReference>
<dbReference type="EMBL" id="CP002687">
    <property type="protein sequence ID" value="AEE82027.1"/>
    <property type="molecule type" value="Genomic_DNA"/>
</dbReference>
<dbReference type="EMBL" id="CP002687">
    <property type="protein sequence ID" value="AEE82028.1"/>
    <property type="molecule type" value="Genomic_DNA"/>
</dbReference>
<dbReference type="EMBL" id="CP002687">
    <property type="protein sequence ID" value="AEE82029.1"/>
    <property type="molecule type" value="Genomic_DNA"/>
</dbReference>
<dbReference type="EMBL" id="AK117409">
    <property type="protein sequence ID" value="BAC42076.1"/>
    <property type="molecule type" value="mRNA"/>
</dbReference>
<dbReference type="EMBL" id="BT005510">
    <property type="protein sequence ID" value="AAO63930.1"/>
    <property type="molecule type" value="mRNA"/>
</dbReference>
<dbReference type="EMBL" id="BX827878">
    <property type="status" value="NOT_ANNOTATED_CDS"/>
    <property type="molecule type" value="mRNA"/>
</dbReference>
<dbReference type="EMBL" id="BX837648">
    <property type="status" value="NOT_ANNOTATED_CDS"/>
    <property type="molecule type" value="mRNA"/>
</dbReference>
<dbReference type="PIR" id="H85018">
    <property type="entry name" value="H85018"/>
</dbReference>
<dbReference type="PIR" id="T01949">
    <property type="entry name" value="T01949"/>
</dbReference>
<dbReference type="RefSeq" id="NP_192054.1">
    <molecule id="Q9M129-1"/>
    <property type="nucleotide sequence ID" value="NM_116375.4"/>
</dbReference>
<dbReference type="RefSeq" id="NP_849280.1">
    <molecule id="Q9M129-2"/>
    <property type="nucleotide sequence ID" value="NM_178949.2"/>
</dbReference>
<dbReference type="RefSeq" id="NP_974495.1">
    <molecule id="Q9M129-3"/>
    <property type="nucleotide sequence ID" value="NM_202766.3"/>
</dbReference>
<dbReference type="SMR" id="Q9M129"/>
<dbReference type="BioGRID" id="13465">
    <property type="interactions" value="24"/>
</dbReference>
<dbReference type="IntAct" id="Q9M129">
    <property type="interactions" value="24"/>
</dbReference>
<dbReference type="STRING" id="3702.Q9M129"/>
<dbReference type="iPTMnet" id="Q9M129"/>
<dbReference type="PaxDb" id="3702-AT4G01450.2"/>
<dbReference type="ProteomicsDB" id="242771">
    <molecule id="Q9M129-1"/>
</dbReference>
<dbReference type="EnsemblPlants" id="AT4G01450.1">
    <molecule id="Q9M129-2"/>
    <property type="protein sequence ID" value="AT4G01450.1"/>
    <property type="gene ID" value="AT4G01450"/>
</dbReference>
<dbReference type="EnsemblPlants" id="AT4G01450.2">
    <molecule id="Q9M129-1"/>
    <property type="protein sequence ID" value="AT4G01450.2"/>
    <property type="gene ID" value="AT4G01450"/>
</dbReference>
<dbReference type="EnsemblPlants" id="AT4G01450.3">
    <molecule id="Q9M129-3"/>
    <property type="protein sequence ID" value="AT4G01450.3"/>
    <property type="gene ID" value="AT4G01450"/>
</dbReference>
<dbReference type="GeneID" id="828176"/>
<dbReference type="Gramene" id="AT4G01450.1">
    <molecule id="Q9M129-2"/>
    <property type="protein sequence ID" value="AT4G01450.1"/>
    <property type="gene ID" value="AT4G01450"/>
</dbReference>
<dbReference type="Gramene" id="AT4G01450.2">
    <molecule id="Q9M129-1"/>
    <property type="protein sequence ID" value="AT4G01450.2"/>
    <property type="gene ID" value="AT4G01450"/>
</dbReference>
<dbReference type="Gramene" id="AT4G01450.3">
    <molecule id="Q9M129-3"/>
    <property type="protein sequence ID" value="AT4G01450.3"/>
    <property type="gene ID" value="AT4G01450"/>
</dbReference>
<dbReference type="KEGG" id="ath:AT4G01450"/>
<dbReference type="Araport" id="AT4G01450"/>
<dbReference type="TAIR" id="AT4G01450">
    <property type="gene designation" value="UMAMIT30"/>
</dbReference>
<dbReference type="eggNOG" id="ENOG502QWIP">
    <property type="taxonomic scope" value="Eukaryota"/>
</dbReference>
<dbReference type="HOGENOM" id="CLU_025359_1_0_1"/>
<dbReference type="InParanoid" id="Q9M129"/>
<dbReference type="OMA" id="YMFLSGM"/>
<dbReference type="PhylomeDB" id="Q9M129"/>
<dbReference type="PRO" id="PR:Q9M129"/>
<dbReference type="Proteomes" id="UP000006548">
    <property type="component" value="Chromosome 4"/>
</dbReference>
<dbReference type="ExpressionAtlas" id="Q9M129">
    <property type="expression patterns" value="baseline and differential"/>
</dbReference>
<dbReference type="GO" id="GO:0016020">
    <property type="term" value="C:membrane"/>
    <property type="evidence" value="ECO:0007669"/>
    <property type="project" value="UniProtKB-SubCell"/>
</dbReference>
<dbReference type="GO" id="GO:0022857">
    <property type="term" value="F:transmembrane transporter activity"/>
    <property type="evidence" value="ECO:0007669"/>
    <property type="project" value="InterPro"/>
</dbReference>
<dbReference type="InterPro" id="IPR000620">
    <property type="entry name" value="EamA_dom"/>
</dbReference>
<dbReference type="InterPro" id="IPR030184">
    <property type="entry name" value="WAT1-related"/>
</dbReference>
<dbReference type="PANTHER" id="PTHR31218">
    <property type="entry name" value="WAT1-RELATED PROTEIN"/>
    <property type="match status" value="1"/>
</dbReference>
<dbReference type="Pfam" id="PF00892">
    <property type="entry name" value="EamA"/>
    <property type="match status" value="2"/>
</dbReference>
<dbReference type="SUPFAM" id="SSF103481">
    <property type="entry name" value="Multidrug resistance efflux transporter EmrE"/>
    <property type="match status" value="2"/>
</dbReference>
<proteinExistence type="evidence at transcript level"/>
<accession>Q9M129</accession>
<accession>F4JI29</accession>
<accession>O82600</accession>
<accession>Q8GYT0</accession>
<organism>
    <name type="scientific">Arabidopsis thaliana</name>
    <name type="common">Mouse-ear cress</name>
    <dbReference type="NCBI Taxonomy" id="3702"/>
    <lineage>
        <taxon>Eukaryota</taxon>
        <taxon>Viridiplantae</taxon>
        <taxon>Streptophyta</taxon>
        <taxon>Embryophyta</taxon>
        <taxon>Tracheophyta</taxon>
        <taxon>Spermatophyta</taxon>
        <taxon>Magnoliopsida</taxon>
        <taxon>eudicotyledons</taxon>
        <taxon>Gunneridae</taxon>
        <taxon>Pentapetalae</taxon>
        <taxon>rosids</taxon>
        <taxon>malvids</taxon>
        <taxon>Brassicales</taxon>
        <taxon>Brassicaceae</taxon>
        <taxon>Camelineae</taxon>
        <taxon>Arabidopsis</taxon>
    </lineage>
</organism>
<keyword id="KW-0025">Alternative splicing</keyword>
<keyword id="KW-0472">Membrane</keyword>
<keyword id="KW-1185">Reference proteome</keyword>
<keyword id="KW-0677">Repeat</keyword>
<keyword id="KW-0812">Transmembrane</keyword>
<keyword id="KW-1133">Transmembrane helix</keyword>
<protein>
    <recommendedName>
        <fullName>WAT1-related protein At4g01450</fullName>
    </recommendedName>
</protein>
<gene>
    <name type="ordered locus">At4g01450</name>
    <name type="ORF">F11O4.14</name>
</gene>
<evidence type="ECO:0000250" key="1"/>
<evidence type="ECO:0000255" key="2"/>
<evidence type="ECO:0000303" key="3">
    <source>
    </source>
</evidence>
<evidence type="ECO:0000303" key="4">
    <source>
    </source>
</evidence>
<evidence type="ECO:0000303" key="5">
    <source>
    </source>
</evidence>
<evidence type="ECO:0000305" key="6"/>
<feature type="chain" id="PRO_0000421338" description="WAT1-related protein At4g01450">
    <location>
        <begin position="1"/>
        <end position="361"/>
    </location>
</feature>
<feature type="transmembrane region" description="Helical" evidence="2">
    <location>
        <begin position="8"/>
        <end position="28"/>
    </location>
</feature>
<feature type="transmembrane region" description="Helical" evidence="2">
    <location>
        <begin position="40"/>
        <end position="60"/>
    </location>
</feature>
<feature type="transmembrane region" description="Helical" evidence="2">
    <location>
        <begin position="76"/>
        <end position="96"/>
    </location>
</feature>
<feature type="transmembrane region" description="Helical" evidence="2">
    <location>
        <begin position="103"/>
        <end position="123"/>
    </location>
</feature>
<feature type="transmembrane region" description="Helical" evidence="2">
    <location>
        <begin position="132"/>
        <end position="152"/>
    </location>
</feature>
<feature type="transmembrane region" description="Helical" evidence="2">
    <location>
        <begin position="177"/>
        <end position="197"/>
    </location>
</feature>
<feature type="transmembrane region" description="Helical" evidence="2">
    <location>
        <begin position="209"/>
        <end position="229"/>
    </location>
</feature>
<feature type="transmembrane region" description="Helical" evidence="2">
    <location>
        <begin position="243"/>
        <end position="263"/>
    </location>
</feature>
<feature type="transmembrane region" description="Helical" evidence="2">
    <location>
        <begin position="273"/>
        <end position="293"/>
    </location>
</feature>
<feature type="transmembrane region" description="Helical" evidence="2">
    <location>
        <begin position="298"/>
        <end position="318"/>
    </location>
</feature>
<feature type="domain" description="EamA 1">
    <location>
        <begin position="21"/>
        <end position="142"/>
    </location>
</feature>
<feature type="domain" description="EamA 2">
    <location>
        <begin position="194"/>
        <end position="317"/>
    </location>
</feature>
<feature type="splice variant" id="VSP_045513" description="In isoform 3." evidence="5">
    <original>TLQCALLSLIKTRHLEDWILRDELTI</original>
    <variation>SGCTRYVYGGHVVVYQTTRTCRFLII</variation>
    <location>
        <begin position="220"/>
        <end position="245"/>
    </location>
</feature>
<feature type="splice variant" id="VSP_045514" description="In isoform 3." evidence="5">
    <location>
        <begin position="246"/>
        <end position="361"/>
    </location>
</feature>
<feature type="splice variant" id="VSP_045515" description="In isoform 2." evidence="3 4">
    <location>
        <begin position="302"/>
        <end position="319"/>
    </location>
</feature>
<feature type="sequence conflict" description="In Ref. 5; BX827878." evidence="6" ref="5">
    <original>T</original>
    <variation>R</variation>
    <location>
        <position position="64"/>
    </location>
</feature>
<feature type="sequence conflict" description="In Ref. 5; BX837648." evidence="6" ref="5">
    <original>A</original>
    <variation>S</variation>
    <location>
        <position position="80"/>
    </location>
</feature>
<feature type="sequence conflict" description="In Ref. 5; BX827878." evidence="6" ref="5">
    <original>A</original>
    <variation>T</variation>
    <location>
        <position position="80"/>
    </location>
</feature>
<feature type="sequence conflict" description="In Ref. 5; BX827878." evidence="6" ref="5">
    <original>L</original>
    <variation>F</variation>
    <location>
        <position position="86"/>
    </location>
</feature>
<feature type="sequence conflict" description="In Ref. 5; BX837648." evidence="6" ref="5">
    <original>A</original>
    <variation>S</variation>
    <location>
        <position position="100"/>
    </location>
</feature>
<feature type="sequence conflict" description="In Ref. 5; BX827878." evidence="6" ref="5">
    <original>Y</original>
    <variation>H</variation>
    <location>
        <position position="299"/>
    </location>
</feature>
<feature type="sequence conflict" description="In Ref. 5; BX837648." evidence="6" ref="5">
    <original>G</original>
    <variation>C</variation>
    <location sequence="Q9M129-3">
        <position position="221"/>
    </location>
</feature>